<gene>
    <name evidence="1" type="primary">fdhD</name>
    <name type="ordered locus">Vapar_3020</name>
</gene>
<keyword id="KW-0963">Cytoplasm</keyword>
<keyword id="KW-0501">Molybdenum cofactor biosynthesis</keyword>
<proteinExistence type="inferred from homology"/>
<sequence length="278" mass="29071">MNLSDVPLRPGSAELLPVRGVRALQAFDNRDWVAVEVPVALEFNGIAHAVMLATPTDLADFALGFALSEGILLGRNELYGVEEAYAPEGITLKLDVASAAFARLKARRRSMAGRTGCGLCGTESLAHVTRALPPLPEGPALSTRAVARGMRELASMQVLQKVTGAVHAAAWCSAEGEALLVREDVGRHNALDKLVGALARSSVPASTGFIAVTSRASFEMVQKTVAARVPLLAAVSASTSLATAIAEDAGLTLAGFVRGDDLVIYTHPWRLNGLPANA</sequence>
<feature type="chain" id="PRO_1000203969" description="Sulfur carrier protein FdhD">
    <location>
        <begin position="1"/>
        <end position="278"/>
    </location>
</feature>
<feature type="active site" description="Cysteine persulfide intermediate" evidence="1">
    <location>
        <position position="117"/>
    </location>
</feature>
<organism>
    <name type="scientific">Variovorax paradoxus (strain S110)</name>
    <dbReference type="NCBI Taxonomy" id="543728"/>
    <lineage>
        <taxon>Bacteria</taxon>
        <taxon>Pseudomonadati</taxon>
        <taxon>Pseudomonadota</taxon>
        <taxon>Betaproteobacteria</taxon>
        <taxon>Burkholderiales</taxon>
        <taxon>Comamonadaceae</taxon>
        <taxon>Variovorax</taxon>
    </lineage>
</organism>
<reference key="1">
    <citation type="journal article" date="2011" name="J. Bacteriol.">
        <title>Complete genome sequence of the metabolically versatile plant growth-promoting endophyte, Variovorax paradoxus S110.</title>
        <authorList>
            <person name="Han J.I."/>
            <person name="Choi H.K."/>
            <person name="Lee S.W."/>
            <person name="Orwin P.M."/>
            <person name="Kim J."/>
            <person name="Laroe S.L."/>
            <person name="Kim T.G."/>
            <person name="O'Neil J."/>
            <person name="Leadbetter J.R."/>
            <person name="Lee S.Y."/>
            <person name="Hur C.G."/>
            <person name="Spain J.C."/>
            <person name="Ovchinnikova G."/>
            <person name="Goodwin L."/>
            <person name="Han C."/>
        </authorList>
    </citation>
    <scope>NUCLEOTIDE SEQUENCE [LARGE SCALE GENOMIC DNA]</scope>
    <source>
        <strain>S110</strain>
    </source>
</reference>
<name>FDHD_VARPS</name>
<protein>
    <recommendedName>
        <fullName evidence="1">Sulfur carrier protein FdhD</fullName>
    </recommendedName>
</protein>
<dbReference type="EMBL" id="CP001635">
    <property type="protein sequence ID" value="ACS19639.1"/>
    <property type="molecule type" value="Genomic_DNA"/>
</dbReference>
<dbReference type="SMR" id="C5CP12"/>
<dbReference type="STRING" id="543728.Vapar_3020"/>
<dbReference type="KEGG" id="vap:Vapar_3020"/>
<dbReference type="eggNOG" id="COG1526">
    <property type="taxonomic scope" value="Bacteria"/>
</dbReference>
<dbReference type="HOGENOM" id="CLU_056887_2_0_4"/>
<dbReference type="OrthoDB" id="3197277at2"/>
<dbReference type="GO" id="GO:0005737">
    <property type="term" value="C:cytoplasm"/>
    <property type="evidence" value="ECO:0007669"/>
    <property type="project" value="UniProtKB-SubCell"/>
</dbReference>
<dbReference type="GO" id="GO:0097163">
    <property type="term" value="F:sulfur carrier activity"/>
    <property type="evidence" value="ECO:0007669"/>
    <property type="project" value="UniProtKB-UniRule"/>
</dbReference>
<dbReference type="GO" id="GO:0016783">
    <property type="term" value="F:sulfurtransferase activity"/>
    <property type="evidence" value="ECO:0007669"/>
    <property type="project" value="InterPro"/>
</dbReference>
<dbReference type="GO" id="GO:0006777">
    <property type="term" value="P:Mo-molybdopterin cofactor biosynthetic process"/>
    <property type="evidence" value="ECO:0007669"/>
    <property type="project" value="UniProtKB-UniRule"/>
</dbReference>
<dbReference type="Gene3D" id="3.10.20.10">
    <property type="match status" value="1"/>
</dbReference>
<dbReference type="Gene3D" id="3.40.140.10">
    <property type="entry name" value="Cytidine Deaminase, domain 2"/>
    <property type="match status" value="1"/>
</dbReference>
<dbReference type="HAMAP" id="MF_00187">
    <property type="entry name" value="FdhD"/>
    <property type="match status" value="1"/>
</dbReference>
<dbReference type="InterPro" id="IPR016193">
    <property type="entry name" value="Cytidine_deaminase-like"/>
</dbReference>
<dbReference type="InterPro" id="IPR003786">
    <property type="entry name" value="FdhD"/>
</dbReference>
<dbReference type="NCBIfam" id="TIGR00129">
    <property type="entry name" value="fdhD_narQ"/>
    <property type="match status" value="1"/>
</dbReference>
<dbReference type="PANTHER" id="PTHR30592">
    <property type="entry name" value="FORMATE DEHYDROGENASE"/>
    <property type="match status" value="1"/>
</dbReference>
<dbReference type="PANTHER" id="PTHR30592:SF1">
    <property type="entry name" value="SULFUR CARRIER PROTEIN FDHD"/>
    <property type="match status" value="1"/>
</dbReference>
<dbReference type="Pfam" id="PF02634">
    <property type="entry name" value="FdhD-NarQ"/>
    <property type="match status" value="1"/>
</dbReference>
<dbReference type="PIRSF" id="PIRSF015626">
    <property type="entry name" value="FdhD"/>
    <property type="match status" value="1"/>
</dbReference>
<dbReference type="SUPFAM" id="SSF53927">
    <property type="entry name" value="Cytidine deaminase-like"/>
    <property type="match status" value="1"/>
</dbReference>
<evidence type="ECO:0000255" key="1">
    <source>
        <dbReference type="HAMAP-Rule" id="MF_00187"/>
    </source>
</evidence>
<comment type="function">
    <text evidence="1">Required for formate dehydrogenase (FDH) activity. Acts as a sulfur carrier protein that transfers sulfur from IscS to the molybdenum cofactor prior to its insertion into FDH.</text>
</comment>
<comment type="subcellular location">
    <subcellularLocation>
        <location evidence="1">Cytoplasm</location>
    </subcellularLocation>
</comment>
<comment type="similarity">
    <text evidence="1">Belongs to the FdhD family.</text>
</comment>
<accession>C5CP12</accession>